<name>DIM1_CHATD</name>
<organism>
    <name type="scientific">Chaetomium thermophilum (strain DSM 1495 / CBS 144.50 / IMI 039719)</name>
    <name type="common">Thermochaetoides thermophila</name>
    <dbReference type="NCBI Taxonomy" id="759272"/>
    <lineage>
        <taxon>Eukaryota</taxon>
        <taxon>Fungi</taxon>
        <taxon>Dikarya</taxon>
        <taxon>Ascomycota</taxon>
        <taxon>Pezizomycotina</taxon>
        <taxon>Sordariomycetes</taxon>
        <taxon>Sordariomycetidae</taxon>
        <taxon>Sordariales</taxon>
        <taxon>Chaetomiaceae</taxon>
        <taxon>Thermochaetoides</taxon>
    </lineage>
</organism>
<protein>
    <recommendedName>
        <fullName>Dimethyladenosine transferase</fullName>
        <ecNumber>2.1.1.183</ecNumber>
    </recommendedName>
    <alternativeName>
        <fullName>18S rRNA (adenine(1779)-N(6)/adenine(1780)-N(6))-dimethyltransferase</fullName>
    </alternativeName>
    <alternativeName>
        <fullName>18S rRNA dimethylase</fullName>
    </alternativeName>
    <alternativeName>
        <fullName>S-adenosylmethionine-6-N', N'-adenosyl(rRNA) dimethyltransferase</fullName>
    </alternativeName>
</protein>
<dbReference type="EC" id="2.1.1.183"/>
<dbReference type="EMBL" id="GL988046">
    <property type="protein sequence ID" value="EGS18354.1"/>
    <property type="status" value="ALT_SEQ"/>
    <property type="molecule type" value="Genomic_DNA"/>
</dbReference>
<dbReference type="RefSeq" id="XP_006696685.1">
    <property type="nucleotide sequence ID" value="XM_006696622.1"/>
</dbReference>
<dbReference type="SMR" id="G0SEH7"/>
<dbReference type="STRING" id="759272.G0SEH7"/>
<dbReference type="GeneID" id="18260417"/>
<dbReference type="KEGG" id="cthr:CTHT_0063790"/>
<dbReference type="eggNOG" id="KOG0820">
    <property type="taxonomic scope" value="Eukaryota"/>
</dbReference>
<dbReference type="HOGENOM" id="CLU_041220_2_0_1"/>
<dbReference type="OrthoDB" id="74991at2759"/>
<dbReference type="Proteomes" id="UP000008066">
    <property type="component" value="Unassembled WGS sequence"/>
</dbReference>
<dbReference type="GO" id="GO:0005737">
    <property type="term" value="C:cytoplasm"/>
    <property type="evidence" value="ECO:0007669"/>
    <property type="project" value="UniProtKB-SubCell"/>
</dbReference>
<dbReference type="GO" id="GO:0005730">
    <property type="term" value="C:nucleolus"/>
    <property type="evidence" value="ECO:0007669"/>
    <property type="project" value="UniProtKB-SubCell"/>
</dbReference>
<dbReference type="GO" id="GO:0052909">
    <property type="term" value="F:18S rRNA (adenine(1779)-N(6)/adenine(1780)-N(6))-dimethyltransferase activity"/>
    <property type="evidence" value="ECO:0007669"/>
    <property type="project" value="UniProtKB-EC"/>
</dbReference>
<dbReference type="GO" id="GO:0003723">
    <property type="term" value="F:RNA binding"/>
    <property type="evidence" value="ECO:0007669"/>
    <property type="project" value="UniProtKB-KW"/>
</dbReference>
<dbReference type="CDD" id="cd02440">
    <property type="entry name" value="AdoMet_MTases"/>
    <property type="match status" value="1"/>
</dbReference>
<dbReference type="FunFam" id="3.40.50.150:FF:000081">
    <property type="entry name" value="rRNA adenine N(6)-methyltransferase"/>
    <property type="match status" value="1"/>
</dbReference>
<dbReference type="Gene3D" id="1.10.8.480">
    <property type="match status" value="1"/>
</dbReference>
<dbReference type="Gene3D" id="3.40.50.150">
    <property type="entry name" value="Vaccinia Virus protein VP39"/>
    <property type="match status" value="1"/>
</dbReference>
<dbReference type="InterPro" id="IPR001737">
    <property type="entry name" value="KsgA/Erm"/>
</dbReference>
<dbReference type="InterPro" id="IPR020596">
    <property type="entry name" value="rRNA_Ade_Mease_Trfase_CS"/>
</dbReference>
<dbReference type="InterPro" id="IPR020598">
    <property type="entry name" value="rRNA_Ade_methylase_Trfase_N"/>
</dbReference>
<dbReference type="InterPro" id="IPR011530">
    <property type="entry name" value="rRNA_adenine_dimethylase"/>
</dbReference>
<dbReference type="InterPro" id="IPR029063">
    <property type="entry name" value="SAM-dependent_MTases_sf"/>
</dbReference>
<dbReference type="NCBIfam" id="TIGR00755">
    <property type="entry name" value="ksgA"/>
    <property type="match status" value="1"/>
</dbReference>
<dbReference type="PANTHER" id="PTHR11727">
    <property type="entry name" value="DIMETHYLADENOSINE TRANSFERASE"/>
    <property type="match status" value="1"/>
</dbReference>
<dbReference type="PANTHER" id="PTHR11727:SF7">
    <property type="entry name" value="DIMETHYLADENOSINE TRANSFERASE-RELATED"/>
    <property type="match status" value="1"/>
</dbReference>
<dbReference type="Pfam" id="PF00398">
    <property type="entry name" value="RrnaAD"/>
    <property type="match status" value="1"/>
</dbReference>
<dbReference type="SMART" id="SM00650">
    <property type="entry name" value="rADc"/>
    <property type="match status" value="1"/>
</dbReference>
<dbReference type="SUPFAM" id="SSF53335">
    <property type="entry name" value="S-adenosyl-L-methionine-dependent methyltransferases"/>
    <property type="match status" value="1"/>
</dbReference>
<dbReference type="PROSITE" id="PS01131">
    <property type="entry name" value="RRNA_A_DIMETH"/>
    <property type="match status" value="1"/>
</dbReference>
<dbReference type="PROSITE" id="PS51689">
    <property type="entry name" value="SAM_RNA_A_N6_MT"/>
    <property type="match status" value="1"/>
</dbReference>
<proteinExistence type="inferred from homology"/>
<keyword id="KW-0963">Cytoplasm</keyword>
<keyword id="KW-0489">Methyltransferase</keyword>
<keyword id="KW-0539">Nucleus</keyword>
<keyword id="KW-1185">Reference proteome</keyword>
<keyword id="KW-0690">Ribosome biogenesis</keyword>
<keyword id="KW-0694">RNA-binding</keyword>
<keyword id="KW-0698">rRNA processing</keyword>
<keyword id="KW-0949">S-adenosyl-L-methionine</keyword>
<keyword id="KW-0808">Transferase</keyword>
<accession>G0SEH7</accession>
<gene>
    <name type="primary">DIM1</name>
    <name type="ORF">CTHT_0063790</name>
</gene>
<comment type="function">
    <text evidence="1">Specifically dimethylates two adjacent adenosines in the loop of a conserved hairpin near the 3'-end of 18S rRNA in the 40S particle.</text>
</comment>
<comment type="catalytic activity">
    <reaction evidence="1">
        <text>adenosine(1779)/adenosine(1780) in 18S rRNA + 4 S-adenosyl-L-methionine = N(6)-dimethyladenosine(1779)/N(6)-dimethyladenosine(1780) in 18S rRNA + 4 S-adenosyl-L-homocysteine + 4 H(+)</text>
        <dbReference type="Rhea" id="RHEA:42780"/>
        <dbReference type="Rhea" id="RHEA-COMP:10234"/>
        <dbReference type="Rhea" id="RHEA-COMP:10236"/>
        <dbReference type="ChEBI" id="CHEBI:15378"/>
        <dbReference type="ChEBI" id="CHEBI:57856"/>
        <dbReference type="ChEBI" id="CHEBI:59789"/>
        <dbReference type="ChEBI" id="CHEBI:74411"/>
        <dbReference type="ChEBI" id="CHEBI:74493"/>
        <dbReference type="EC" id="2.1.1.183"/>
    </reaction>
</comment>
<comment type="subcellular location">
    <subcellularLocation>
        <location evidence="1">Cytoplasm</location>
    </subcellularLocation>
    <subcellularLocation>
        <location evidence="1">Nucleus</location>
        <location evidence="1">Nucleolus</location>
    </subcellularLocation>
</comment>
<comment type="similarity">
    <text evidence="2">Belongs to the class I-like SAM-binding methyltransferase superfamily. rRNA adenine N(6)-methyltransferase family.</text>
</comment>
<comment type="sequence caution" evidence="4">
    <conflict type="erroneous gene model prediction">
        <sequence resource="EMBL-CDS" id="EGS18354"/>
    </conflict>
</comment>
<evidence type="ECO:0000250" key="1">
    <source>
        <dbReference type="UniProtKB" id="P41819"/>
    </source>
</evidence>
<evidence type="ECO:0000255" key="2">
    <source>
        <dbReference type="PROSITE-ProRule" id="PRU01026"/>
    </source>
</evidence>
<evidence type="ECO:0000256" key="3">
    <source>
        <dbReference type="SAM" id="MobiDB-lite"/>
    </source>
</evidence>
<evidence type="ECO:0000305" key="4"/>
<sequence length="384" mass="42546">MPKTAKNKRNNAASGPYDKKSKGSGSTNIFKFDKDYGQHILKNPGISDAIVEKAFLKPTDVVVEVGPGTGNITVRALERAKKVIAIELDPRMGAEVTKRVQGTPLAKKLEVILGDVIKLPQIPPCDALISNTPYQISSPLIFKMLSMPQPPRVAVLMFQREFAKRLVAKPGDSLYSRLTVNVNFWATCTHIMKVGKANFKPPPKVESDVVRIEPYLGSARPNIAFEEFDGLLRIAFNRKNKTLRAAFSIKEVLALCEKNYKVYCTLHNIPLDESVLSDPSLTADMDVDMDANSDTDNDNDGDAMEEDDDDMPTFFKEVKEAEAAKEAAKTPSKNPKSKVALIVRAKINKVLTKTGLANKRARQCDQNDFLKLLLAFHEEGIHFS</sequence>
<reference key="1">
    <citation type="journal article" date="2011" name="Cell">
        <title>Insight into structure and assembly of the nuclear pore complex by utilizing the genome of a eukaryotic thermophile.</title>
        <authorList>
            <person name="Amlacher S."/>
            <person name="Sarges P."/>
            <person name="Flemming D."/>
            <person name="van Noort V."/>
            <person name="Kunze R."/>
            <person name="Devos D.P."/>
            <person name="Arumugam M."/>
            <person name="Bork P."/>
            <person name="Hurt E."/>
        </authorList>
    </citation>
    <scope>NUCLEOTIDE SEQUENCE [LARGE SCALE GENOMIC DNA]</scope>
    <source>
        <strain>DSM 1495 / CBS 144.50 / IMI 039719</strain>
    </source>
</reference>
<feature type="chain" id="PRO_0000435809" description="Dimethyladenosine transferase">
    <location>
        <begin position="1"/>
        <end position="384"/>
    </location>
</feature>
<feature type="region of interest" description="Disordered" evidence="3">
    <location>
        <begin position="1"/>
        <end position="24"/>
    </location>
</feature>
<feature type="region of interest" description="Disordered" evidence="3">
    <location>
        <begin position="289"/>
        <end position="309"/>
    </location>
</feature>
<feature type="binding site" evidence="2">
    <location>
        <position position="39"/>
    </location>
    <ligand>
        <name>S-adenosyl-L-methionine</name>
        <dbReference type="ChEBI" id="CHEBI:59789"/>
    </ligand>
</feature>
<feature type="binding site" evidence="2">
    <location>
        <position position="41"/>
    </location>
    <ligand>
        <name>S-adenosyl-L-methionine</name>
        <dbReference type="ChEBI" id="CHEBI:59789"/>
    </ligand>
</feature>
<feature type="binding site" evidence="2">
    <location>
        <position position="66"/>
    </location>
    <ligand>
        <name>S-adenosyl-L-methionine</name>
        <dbReference type="ChEBI" id="CHEBI:59789"/>
    </ligand>
</feature>
<feature type="binding site" evidence="2">
    <location>
        <position position="87"/>
    </location>
    <ligand>
        <name>S-adenosyl-L-methionine</name>
        <dbReference type="ChEBI" id="CHEBI:59789"/>
    </ligand>
</feature>
<feature type="binding site" evidence="2">
    <location>
        <position position="115"/>
    </location>
    <ligand>
        <name>S-adenosyl-L-methionine</name>
        <dbReference type="ChEBI" id="CHEBI:59789"/>
    </ligand>
</feature>
<feature type="binding site" evidence="2">
    <location>
        <position position="131"/>
    </location>
    <ligand>
        <name>S-adenosyl-L-methionine</name>
        <dbReference type="ChEBI" id="CHEBI:59789"/>
    </ligand>
</feature>